<proteinExistence type="inferred from homology"/>
<protein>
    <recommendedName>
        <fullName>Truncated interleukin-1-binding protein</fullName>
    </recommendedName>
    <alternativeName>
        <fullName>Protein B16</fullName>
    </alternativeName>
</protein>
<accession>P21116</accession>
<evidence type="ECO:0000255" key="1"/>
<evidence type="ECO:0000305" key="2"/>
<feature type="signal peptide" evidence="1">
    <location>
        <begin position="1"/>
        <end position="18"/>
    </location>
</feature>
<feature type="chain" id="PRO_0000015462" description="Truncated interleukin-1-binding protein">
    <location>
        <begin position="19"/>
        <end position="30"/>
    </location>
</feature>
<reference key="1">
    <citation type="journal article" date="1990" name="Virology">
        <title>The complete DNA sequence of vaccinia virus.</title>
        <authorList>
            <person name="Goebel S.J."/>
            <person name="Johnson G.P."/>
            <person name="Perkus M.E."/>
            <person name="Davis S.W."/>
            <person name="Winslow J.P."/>
            <person name="Paoletti E."/>
        </authorList>
    </citation>
    <scope>NUCLEOTIDE SEQUENCE [LARGE SCALE GENOMIC DNA]</scope>
</reference>
<reference key="2">
    <citation type="journal article" date="1990" name="Virology">
        <title>Appendix to 'The complete DNA sequence of vaccinia virus'.</title>
        <authorList>
            <person name="Goebel S.J."/>
            <person name="Johnson G.P."/>
            <person name="Perkus M.E."/>
            <person name="Davis S.W."/>
            <person name="Winslow J.P."/>
            <person name="Paoletti E."/>
        </authorList>
    </citation>
    <scope>COMPLETE GENOME</scope>
</reference>
<keyword id="KW-1185">Reference proteome</keyword>
<keyword id="KW-0732">Signal</keyword>
<dbReference type="EMBL" id="M35027">
    <property type="protein sequence ID" value="AAA48214.1"/>
    <property type="molecule type" value="Genomic_DNA"/>
</dbReference>
<dbReference type="PIR" id="F42527">
    <property type="entry name" value="F42527"/>
</dbReference>
<dbReference type="Proteomes" id="UP000008269">
    <property type="component" value="Segment"/>
</dbReference>
<gene>
    <name type="ORF">B16R</name>
</gene>
<comment type="similarity">
    <text evidence="2">Belongs to the interleukin-1 receptor family.</text>
</comment>
<comment type="caution">
    <text evidence="2">B16R of strain Copenhagen contains a stop codon at position 31, which disrupts the ORF. It only encodes the truncated N-terminal part of interleukin-1-binding protein, which is probably not functional.</text>
</comment>
<organism>
    <name type="scientific">Vaccinia virus (strain Copenhagen)</name>
    <name type="common">VACV</name>
    <dbReference type="NCBI Taxonomy" id="10249"/>
    <lineage>
        <taxon>Viruses</taxon>
        <taxon>Varidnaviria</taxon>
        <taxon>Bamfordvirae</taxon>
        <taxon>Nucleocytoviricota</taxon>
        <taxon>Pokkesviricetes</taxon>
        <taxon>Chitovirales</taxon>
        <taxon>Poxviridae</taxon>
        <taxon>Chordopoxvirinae</taxon>
        <taxon>Orthopoxvirus</taxon>
        <taxon>Vaccinia virus</taxon>
    </lineage>
</organism>
<sequence>MSILPVIFLPIFFYSSFVQTFNASECIDKG</sequence>
<name>IL1BP_VACCC</name>
<organismHost>
    <name type="scientific">Homo sapiens</name>
    <name type="common">Human</name>
    <dbReference type="NCBI Taxonomy" id="9606"/>
</organismHost>